<evidence type="ECO:0000255" key="1">
    <source>
        <dbReference type="HAMAP-Rule" id="MF_00249"/>
    </source>
</evidence>
<feature type="chain" id="PRO_1000059025" description="ATP-dependent protease ATPase subunit HslU">
    <location>
        <begin position="1"/>
        <end position="466"/>
    </location>
</feature>
<feature type="binding site" evidence="1">
    <location>
        <position position="18"/>
    </location>
    <ligand>
        <name>ATP</name>
        <dbReference type="ChEBI" id="CHEBI:30616"/>
    </ligand>
</feature>
<feature type="binding site" evidence="1">
    <location>
        <begin position="60"/>
        <end position="65"/>
    </location>
    <ligand>
        <name>ATP</name>
        <dbReference type="ChEBI" id="CHEBI:30616"/>
    </ligand>
</feature>
<feature type="binding site" evidence="1">
    <location>
        <position position="279"/>
    </location>
    <ligand>
        <name>ATP</name>
        <dbReference type="ChEBI" id="CHEBI:30616"/>
    </ligand>
</feature>
<feature type="binding site" evidence="1">
    <location>
        <position position="344"/>
    </location>
    <ligand>
        <name>ATP</name>
        <dbReference type="ChEBI" id="CHEBI:30616"/>
    </ligand>
</feature>
<feature type="binding site" evidence="1">
    <location>
        <position position="416"/>
    </location>
    <ligand>
        <name>ATP</name>
        <dbReference type="ChEBI" id="CHEBI:30616"/>
    </ligand>
</feature>
<reference key="1">
    <citation type="journal article" date="2005" name="Proc. Natl. Acad. Sci. U.S.A.">
        <title>Complete genome sequence of the probiotic lactic acid bacterium Lactobacillus acidophilus NCFM.</title>
        <authorList>
            <person name="Altermann E."/>
            <person name="Russell W.M."/>
            <person name="Azcarate-Peril M.A."/>
            <person name="Barrangou R."/>
            <person name="Buck B.L."/>
            <person name="McAuliffe O."/>
            <person name="Souther N."/>
            <person name="Dobson A."/>
            <person name="Duong T."/>
            <person name="Callanan M."/>
            <person name="Lick S."/>
            <person name="Hamrick A."/>
            <person name="Cano R."/>
            <person name="Klaenhammer T.R."/>
        </authorList>
    </citation>
    <scope>NUCLEOTIDE SEQUENCE [LARGE SCALE GENOMIC DNA]</scope>
    <source>
        <strain>ATCC 700396 / NCK56 / N2 / NCFM</strain>
    </source>
</reference>
<gene>
    <name evidence="1" type="primary">hslU</name>
    <name type="ordered locus">LBA0985</name>
</gene>
<organism>
    <name type="scientific">Lactobacillus acidophilus (strain ATCC 700396 / NCK56 / N2 / NCFM)</name>
    <dbReference type="NCBI Taxonomy" id="272621"/>
    <lineage>
        <taxon>Bacteria</taxon>
        <taxon>Bacillati</taxon>
        <taxon>Bacillota</taxon>
        <taxon>Bacilli</taxon>
        <taxon>Lactobacillales</taxon>
        <taxon>Lactobacillaceae</taxon>
        <taxon>Lactobacillus</taxon>
    </lineage>
</organism>
<proteinExistence type="inferred from homology"/>
<keyword id="KW-0067">ATP-binding</keyword>
<keyword id="KW-0143">Chaperone</keyword>
<keyword id="KW-0963">Cytoplasm</keyword>
<keyword id="KW-0547">Nucleotide-binding</keyword>
<keyword id="KW-1185">Reference proteome</keyword>
<name>HSLU_LACAC</name>
<protein>
    <recommendedName>
        <fullName evidence="1">ATP-dependent protease ATPase subunit HslU</fullName>
    </recommendedName>
    <alternativeName>
        <fullName evidence="1">Unfoldase HslU</fullName>
    </alternativeName>
</protein>
<dbReference type="EMBL" id="CP000033">
    <property type="protein sequence ID" value="AAV42836.1"/>
    <property type="molecule type" value="Genomic_DNA"/>
</dbReference>
<dbReference type="RefSeq" id="WP_011254308.1">
    <property type="nucleotide sequence ID" value="NC_006814.3"/>
</dbReference>
<dbReference type="RefSeq" id="YP_193867.1">
    <property type="nucleotide sequence ID" value="NC_006814.3"/>
</dbReference>
<dbReference type="SMR" id="Q5FKD8"/>
<dbReference type="STRING" id="272621.LBA0985"/>
<dbReference type="GeneID" id="93289901"/>
<dbReference type="KEGG" id="lac:LBA0985"/>
<dbReference type="PATRIC" id="fig|272621.13.peg.936"/>
<dbReference type="eggNOG" id="COG1220">
    <property type="taxonomic scope" value="Bacteria"/>
</dbReference>
<dbReference type="HOGENOM" id="CLU_033123_0_0_9"/>
<dbReference type="OrthoDB" id="9804062at2"/>
<dbReference type="BioCyc" id="LACI272621:G1G49-986-MONOMER"/>
<dbReference type="Proteomes" id="UP000006381">
    <property type="component" value="Chromosome"/>
</dbReference>
<dbReference type="GO" id="GO:0009376">
    <property type="term" value="C:HslUV protease complex"/>
    <property type="evidence" value="ECO:0007669"/>
    <property type="project" value="UniProtKB-UniRule"/>
</dbReference>
<dbReference type="GO" id="GO:0005524">
    <property type="term" value="F:ATP binding"/>
    <property type="evidence" value="ECO:0007669"/>
    <property type="project" value="UniProtKB-UniRule"/>
</dbReference>
<dbReference type="GO" id="GO:0016887">
    <property type="term" value="F:ATP hydrolysis activity"/>
    <property type="evidence" value="ECO:0007669"/>
    <property type="project" value="InterPro"/>
</dbReference>
<dbReference type="GO" id="GO:0008233">
    <property type="term" value="F:peptidase activity"/>
    <property type="evidence" value="ECO:0007669"/>
    <property type="project" value="InterPro"/>
</dbReference>
<dbReference type="GO" id="GO:0036402">
    <property type="term" value="F:proteasome-activating activity"/>
    <property type="evidence" value="ECO:0007669"/>
    <property type="project" value="UniProtKB-UniRule"/>
</dbReference>
<dbReference type="GO" id="GO:0043335">
    <property type="term" value="P:protein unfolding"/>
    <property type="evidence" value="ECO:0007669"/>
    <property type="project" value="UniProtKB-UniRule"/>
</dbReference>
<dbReference type="GO" id="GO:0051603">
    <property type="term" value="P:proteolysis involved in protein catabolic process"/>
    <property type="evidence" value="ECO:0007669"/>
    <property type="project" value="TreeGrafter"/>
</dbReference>
<dbReference type="Gene3D" id="1.10.8.60">
    <property type="match status" value="1"/>
</dbReference>
<dbReference type="Gene3D" id="3.40.50.300">
    <property type="entry name" value="P-loop containing nucleotide triphosphate hydrolases"/>
    <property type="match status" value="2"/>
</dbReference>
<dbReference type="HAMAP" id="MF_00249">
    <property type="entry name" value="HslU"/>
    <property type="match status" value="1"/>
</dbReference>
<dbReference type="InterPro" id="IPR003593">
    <property type="entry name" value="AAA+_ATPase"/>
</dbReference>
<dbReference type="InterPro" id="IPR050052">
    <property type="entry name" value="ATP-dep_Clp_protease_ClpX"/>
</dbReference>
<dbReference type="InterPro" id="IPR003959">
    <property type="entry name" value="ATPase_AAA_core"/>
</dbReference>
<dbReference type="InterPro" id="IPR019489">
    <property type="entry name" value="Clp_ATPase_C"/>
</dbReference>
<dbReference type="InterPro" id="IPR004491">
    <property type="entry name" value="HslU"/>
</dbReference>
<dbReference type="InterPro" id="IPR027417">
    <property type="entry name" value="P-loop_NTPase"/>
</dbReference>
<dbReference type="NCBIfam" id="TIGR00390">
    <property type="entry name" value="hslU"/>
    <property type="match status" value="1"/>
</dbReference>
<dbReference type="NCBIfam" id="NF003544">
    <property type="entry name" value="PRK05201.1"/>
    <property type="match status" value="1"/>
</dbReference>
<dbReference type="PANTHER" id="PTHR48102">
    <property type="entry name" value="ATP-DEPENDENT CLP PROTEASE ATP-BINDING SUBUNIT CLPX-LIKE, MITOCHONDRIAL-RELATED"/>
    <property type="match status" value="1"/>
</dbReference>
<dbReference type="PANTHER" id="PTHR48102:SF3">
    <property type="entry name" value="ATP-DEPENDENT PROTEASE ATPASE SUBUNIT HSLU"/>
    <property type="match status" value="1"/>
</dbReference>
<dbReference type="Pfam" id="PF00004">
    <property type="entry name" value="AAA"/>
    <property type="match status" value="1"/>
</dbReference>
<dbReference type="Pfam" id="PF07724">
    <property type="entry name" value="AAA_2"/>
    <property type="match status" value="1"/>
</dbReference>
<dbReference type="Pfam" id="PF10431">
    <property type="entry name" value="ClpB_D2-small"/>
    <property type="match status" value="1"/>
</dbReference>
<dbReference type="SMART" id="SM00382">
    <property type="entry name" value="AAA"/>
    <property type="match status" value="1"/>
</dbReference>
<dbReference type="SMART" id="SM01086">
    <property type="entry name" value="ClpB_D2-small"/>
    <property type="match status" value="1"/>
</dbReference>
<dbReference type="SUPFAM" id="SSF52540">
    <property type="entry name" value="P-loop containing nucleoside triphosphate hydrolases"/>
    <property type="match status" value="1"/>
</dbReference>
<comment type="function">
    <text evidence="1">ATPase subunit of a proteasome-like degradation complex; this subunit has chaperone activity. The binding of ATP and its subsequent hydrolysis by HslU are essential for unfolding of protein substrates subsequently hydrolyzed by HslV. HslU recognizes the N-terminal part of its protein substrates and unfolds these before they are guided to HslV for hydrolysis.</text>
</comment>
<comment type="subunit">
    <text evidence="1">A double ring-shaped homohexamer of HslV is capped on each side by a ring-shaped HslU homohexamer. The assembly of the HslU/HslV complex is dependent on binding of ATP.</text>
</comment>
<comment type="subcellular location">
    <subcellularLocation>
        <location evidence="1">Cytoplasm</location>
    </subcellularLocation>
</comment>
<comment type="similarity">
    <text evidence="1">Belongs to the ClpX chaperone family. HslU subfamily.</text>
</comment>
<sequence length="466" mass="52809">MAIKTPKEIVKILNEYIIGQDEAKKSVAIALYNRYRRMQLPKQMQREITPKNLLMAGPTGVGKTEIARRLATIVEAPFVKVEATKFTEVGYVGRDVESMVRDLVGEAVRMEEKDQFARVKPQATKEANKELVRLLAPGEKREKRENQVQQMQDMMSMLMGGMNNQTNNNQEEISEEVRNQRMDVAEKLNKDLLEDREVTIEVEQAPKANPMSDMMGQMGMDMGSMLNDIMPKKKVKRTLPVREAREVLIQEESRKLVDYDTIYQRAIERSQNNGIIFIDEIDKIIAGNKRNSGEVSREGVQRDILPIVEGSTVNTKYGPVSTDHILFIAAGAFAESKPSDLIPELQGRFPIRVELNALTKDDFVKILKDPQNSLLKQYIALLKADGIKLIFTQEAVDKIAEIAFDVNQGTDNIGARRLSTILEKLLEDVLYEGPDMEMGEITITEAYVEEKLGDIIMNKDLTKFIL</sequence>
<accession>Q5FKD8</accession>